<gene>
    <name evidence="1" type="primary">nadK</name>
    <name type="ordered locus">BF3741</name>
</gene>
<reference key="1">
    <citation type="journal article" date="2005" name="Science">
        <title>Extensive DNA inversions in the B. fragilis genome control variable gene expression.</title>
        <authorList>
            <person name="Cerdeno-Tarraga A.-M."/>
            <person name="Patrick S."/>
            <person name="Crossman L.C."/>
            <person name="Blakely G."/>
            <person name="Abratt V."/>
            <person name="Lennard N."/>
            <person name="Poxton I."/>
            <person name="Duerden B."/>
            <person name="Harris B."/>
            <person name="Quail M.A."/>
            <person name="Barron A."/>
            <person name="Clark L."/>
            <person name="Corton C."/>
            <person name="Doggett J."/>
            <person name="Holden M.T.G."/>
            <person name="Larke N."/>
            <person name="Line A."/>
            <person name="Lord A."/>
            <person name="Norbertczak H."/>
            <person name="Ormond D."/>
            <person name="Price C."/>
            <person name="Rabbinowitsch E."/>
            <person name="Woodward J."/>
            <person name="Barrell B.G."/>
            <person name="Parkhill J."/>
        </authorList>
    </citation>
    <scope>NUCLEOTIDE SEQUENCE [LARGE SCALE GENOMIC DNA]</scope>
    <source>
        <strain>ATCC 25285 / DSM 2151 / CCUG 4856 / JCM 11019 / LMG 10263 / NCTC 9343 / Onslow / VPI 2553 / EN-2</strain>
    </source>
</reference>
<comment type="function">
    <text evidence="1">Involved in the regulation of the intracellular balance of NAD and NADP, and is a key enzyme in the biosynthesis of NADP. Catalyzes specifically the phosphorylation on 2'-hydroxyl of the adenosine moiety of NAD to yield NADP.</text>
</comment>
<comment type="catalytic activity">
    <reaction evidence="1">
        <text>NAD(+) + ATP = ADP + NADP(+) + H(+)</text>
        <dbReference type="Rhea" id="RHEA:18629"/>
        <dbReference type="ChEBI" id="CHEBI:15378"/>
        <dbReference type="ChEBI" id="CHEBI:30616"/>
        <dbReference type="ChEBI" id="CHEBI:57540"/>
        <dbReference type="ChEBI" id="CHEBI:58349"/>
        <dbReference type="ChEBI" id="CHEBI:456216"/>
        <dbReference type="EC" id="2.7.1.23"/>
    </reaction>
</comment>
<comment type="cofactor">
    <cofactor evidence="1">
        <name>a divalent metal cation</name>
        <dbReference type="ChEBI" id="CHEBI:60240"/>
    </cofactor>
</comment>
<comment type="subcellular location">
    <subcellularLocation>
        <location evidence="1">Cytoplasm</location>
    </subcellularLocation>
</comment>
<comment type="similarity">
    <text evidence="1">Belongs to the NAD kinase family.</text>
</comment>
<keyword id="KW-0067">ATP-binding</keyword>
<keyword id="KW-0963">Cytoplasm</keyword>
<keyword id="KW-0418">Kinase</keyword>
<keyword id="KW-0520">NAD</keyword>
<keyword id="KW-0521">NADP</keyword>
<keyword id="KW-0547">Nucleotide-binding</keyword>
<keyword id="KW-0808">Transferase</keyword>
<feature type="chain" id="PRO_0000229609" description="NAD kinase">
    <location>
        <begin position="1"/>
        <end position="290"/>
    </location>
</feature>
<feature type="active site" description="Proton acceptor" evidence="1">
    <location>
        <position position="72"/>
    </location>
</feature>
<feature type="binding site" evidence="1">
    <location>
        <begin position="72"/>
        <end position="73"/>
    </location>
    <ligand>
        <name>NAD(+)</name>
        <dbReference type="ChEBI" id="CHEBI:57540"/>
    </ligand>
</feature>
<feature type="binding site" evidence="1">
    <location>
        <position position="77"/>
    </location>
    <ligand>
        <name>NAD(+)</name>
        <dbReference type="ChEBI" id="CHEBI:57540"/>
    </ligand>
</feature>
<feature type="binding site" evidence="1">
    <location>
        <begin position="145"/>
        <end position="146"/>
    </location>
    <ligand>
        <name>NAD(+)</name>
        <dbReference type="ChEBI" id="CHEBI:57540"/>
    </ligand>
</feature>
<feature type="binding site" evidence="1">
    <location>
        <position position="175"/>
    </location>
    <ligand>
        <name>NAD(+)</name>
        <dbReference type="ChEBI" id="CHEBI:57540"/>
    </ligand>
</feature>
<feature type="binding site" evidence="1">
    <location>
        <begin position="186"/>
        <end position="191"/>
    </location>
    <ligand>
        <name>NAD(+)</name>
        <dbReference type="ChEBI" id="CHEBI:57540"/>
    </ligand>
</feature>
<feature type="binding site" evidence="1">
    <location>
        <position position="210"/>
    </location>
    <ligand>
        <name>NAD(+)</name>
        <dbReference type="ChEBI" id="CHEBI:57540"/>
    </ligand>
</feature>
<sequence>MKFAIFGNTYQAKKSSHAATLFKLLEKHGAEICVCREFHRFLKSDLKLNVKADDLFDENNFDADMVISIGGDGTFLKAARRVGNKGIPILGINTGRLGFLADVSPEEMEETIEEVYQNHYTVEERSVLQLLCDDKHLQNSPYALNEIAILKRDSSSMISIRTAINGAHLTTYQADGLIIATPTGSTAYSLSVGGPIIVPHSKTIAITPVAPHSLNVRPIVICDDWEITLDVESRSHNFLVAIDGSSETCKETTRLTIRRADYSIKVVKRFNHIFFDTLRTKMMWGADSRV</sequence>
<name>NADK_BACFN</name>
<dbReference type="EC" id="2.7.1.23" evidence="1"/>
<dbReference type="EMBL" id="CR626927">
    <property type="protein sequence ID" value="CAH09421.1"/>
    <property type="molecule type" value="Genomic_DNA"/>
</dbReference>
<dbReference type="RefSeq" id="WP_005791134.1">
    <property type="nucleotide sequence ID" value="NZ_UFTH01000001.1"/>
</dbReference>
<dbReference type="SMR" id="Q5L911"/>
<dbReference type="PaxDb" id="272559-BF9343_3640"/>
<dbReference type="KEGG" id="bfs:BF9343_3640"/>
<dbReference type="eggNOG" id="COG0061">
    <property type="taxonomic scope" value="Bacteria"/>
</dbReference>
<dbReference type="HOGENOM" id="CLU_008831_0_3_10"/>
<dbReference type="Proteomes" id="UP000006731">
    <property type="component" value="Chromosome"/>
</dbReference>
<dbReference type="GO" id="GO:0005737">
    <property type="term" value="C:cytoplasm"/>
    <property type="evidence" value="ECO:0007669"/>
    <property type="project" value="UniProtKB-SubCell"/>
</dbReference>
<dbReference type="GO" id="GO:0005524">
    <property type="term" value="F:ATP binding"/>
    <property type="evidence" value="ECO:0007669"/>
    <property type="project" value="UniProtKB-KW"/>
</dbReference>
<dbReference type="GO" id="GO:0046872">
    <property type="term" value="F:metal ion binding"/>
    <property type="evidence" value="ECO:0007669"/>
    <property type="project" value="UniProtKB-UniRule"/>
</dbReference>
<dbReference type="GO" id="GO:0051287">
    <property type="term" value="F:NAD binding"/>
    <property type="evidence" value="ECO:0007669"/>
    <property type="project" value="UniProtKB-ARBA"/>
</dbReference>
<dbReference type="GO" id="GO:0003951">
    <property type="term" value="F:NAD+ kinase activity"/>
    <property type="evidence" value="ECO:0007669"/>
    <property type="project" value="UniProtKB-UniRule"/>
</dbReference>
<dbReference type="GO" id="GO:0019674">
    <property type="term" value="P:NAD metabolic process"/>
    <property type="evidence" value="ECO:0007669"/>
    <property type="project" value="InterPro"/>
</dbReference>
<dbReference type="GO" id="GO:0006741">
    <property type="term" value="P:NADP biosynthetic process"/>
    <property type="evidence" value="ECO:0007669"/>
    <property type="project" value="UniProtKB-UniRule"/>
</dbReference>
<dbReference type="FunFam" id="2.60.200.30:FF:000013">
    <property type="entry name" value="NAD kinase"/>
    <property type="match status" value="1"/>
</dbReference>
<dbReference type="Gene3D" id="3.40.50.10330">
    <property type="entry name" value="Probable inorganic polyphosphate/atp-NAD kinase, domain 1"/>
    <property type="match status" value="1"/>
</dbReference>
<dbReference type="Gene3D" id="2.60.200.30">
    <property type="entry name" value="Probable inorganic polyphosphate/atp-NAD kinase, domain 2"/>
    <property type="match status" value="1"/>
</dbReference>
<dbReference type="HAMAP" id="MF_00361">
    <property type="entry name" value="NAD_kinase"/>
    <property type="match status" value="1"/>
</dbReference>
<dbReference type="InterPro" id="IPR017438">
    <property type="entry name" value="ATP-NAD_kinase_N"/>
</dbReference>
<dbReference type="InterPro" id="IPR017437">
    <property type="entry name" value="ATP-NAD_kinase_PpnK-typ_C"/>
</dbReference>
<dbReference type="InterPro" id="IPR016064">
    <property type="entry name" value="NAD/diacylglycerol_kinase_sf"/>
</dbReference>
<dbReference type="InterPro" id="IPR002504">
    <property type="entry name" value="NADK"/>
</dbReference>
<dbReference type="NCBIfam" id="NF002521">
    <property type="entry name" value="PRK01911.1"/>
    <property type="match status" value="1"/>
</dbReference>
<dbReference type="PANTHER" id="PTHR20275">
    <property type="entry name" value="NAD KINASE"/>
    <property type="match status" value="1"/>
</dbReference>
<dbReference type="PANTHER" id="PTHR20275:SF0">
    <property type="entry name" value="NAD KINASE"/>
    <property type="match status" value="1"/>
</dbReference>
<dbReference type="Pfam" id="PF01513">
    <property type="entry name" value="NAD_kinase"/>
    <property type="match status" value="1"/>
</dbReference>
<dbReference type="Pfam" id="PF20143">
    <property type="entry name" value="NAD_kinase_C"/>
    <property type="match status" value="1"/>
</dbReference>
<dbReference type="SUPFAM" id="SSF111331">
    <property type="entry name" value="NAD kinase/diacylglycerol kinase-like"/>
    <property type="match status" value="1"/>
</dbReference>
<organism>
    <name type="scientific">Bacteroides fragilis (strain ATCC 25285 / DSM 2151 / CCUG 4856 / JCM 11019 / LMG 10263 / NCTC 9343 / Onslow / VPI 2553 / EN-2)</name>
    <dbReference type="NCBI Taxonomy" id="272559"/>
    <lineage>
        <taxon>Bacteria</taxon>
        <taxon>Pseudomonadati</taxon>
        <taxon>Bacteroidota</taxon>
        <taxon>Bacteroidia</taxon>
        <taxon>Bacteroidales</taxon>
        <taxon>Bacteroidaceae</taxon>
        <taxon>Bacteroides</taxon>
    </lineage>
</organism>
<proteinExistence type="inferred from homology"/>
<accession>Q5L911</accession>
<protein>
    <recommendedName>
        <fullName evidence="1">NAD kinase</fullName>
        <ecNumber evidence="1">2.7.1.23</ecNumber>
    </recommendedName>
    <alternativeName>
        <fullName evidence="1">ATP-dependent NAD kinase</fullName>
    </alternativeName>
</protein>
<evidence type="ECO:0000255" key="1">
    <source>
        <dbReference type="HAMAP-Rule" id="MF_00361"/>
    </source>
</evidence>